<proteinExistence type="evidence at protein level"/>
<gene>
    <name type="primary">CAPZA2</name>
</gene>
<sequence>MADLEEQLSDEEKVRIAAKFIIHAPPGEFNEVFNDVRLLLNNDNLLREGAAHAFAQYNLDQFTPVKIEGYEDQVLITEHGDLGNGKFLDPKNRISFKFDHLRKEATDPRPYEAENAIESWRTSVETALRAYVKEHYPNGVCTVYGKKIDGQQTIIACIESHQFQAKNFWNGRWRSEWKFTITPSTTQVVGILKIQVHYYEDGNVQLVSHKDIQDSLTVSNEVQTAKEFIKIVEAAENEYQTAISENYQTMSDTTFKALRRQLPVTRTKIDWNKILSYKIGKEMQNA</sequence>
<evidence type="ECO:0000250" key="1"/>
<evidence type="ECO:0000250" key="2">
    <source>
        <dbReference type="UniProtKB" id="P47755"/>
    </source>
</evidence>
<evidence type="ECO:0000305" key="3"/>
<evidence type="ECO:0007829" key="4">
    <source>
        <dbReference type="PDB" id="3RM1"/>
    </source>
</evidence>
<organism>
    <name type="scientific">Bos taurus</name>
    <name type="common">Bovine</name>
    <dbReference type="NCBI Taxonomy" id="9913"/>
    <lineage>
        <taxon>Eukaryota</taxon>
        <taxon>Metazoa</taxon>
        <taxon>Chordata</taxon>
        <taxon>Craniata</taxon>
        <taxon>Vertebrata</taxon>
        <taxon>Euteleostomi</taxon>
        <taxon>Mammalia</taxon>
        <taxon>Eutheria</taxon>
        <taxon>Laurasiatheria</taxon>
        <taxon>Artiodactyla</taxon>
        <taxon>Ruminantia</taxon>
        <taxon>Pecora</taxon>
        <taxon>Bovidae</taxon>
        <taxon>Bovinae</taxon>
        <taxon>Bos</taxon>
    </lineage>
</organism>
<protein>
    <recommendedName>
        <fullName>F-actin-capping protein subunit alpha-2</fullName>
    </recommendedName>
    <alternativeName>
        <fullName>CapZ alpha-2</fullName>
    </alternativeName>
</protein>
<feature type="initiator methionine" description="Removed" evidence="2">
    <location>
        <position position="1"/>
    </location>
</feature>
<feature type="chain" id="PRO_0000226317" description="F-actin-capping protein subunit alpha-2">
    <location>
        <begin position="2"/>
        <end position="286"/>
    </location>
</feature>
<feature type="modified residue" description="N-acetylalanine" evidence="2">
    <location>
        <position position="2"/>
    </location>
</feature>
<feature type="modified residue" description="Phosphoserine" evidence="2">
    <location>
        <position position="9"/>
    </location>
</feature>
<feature type="helix" evidence="4">
    <location>
        <begin position="271"/>
        <end position="273"/>
    </location>
</feature>
<comment type="function">
    <text evidence="1">F-actin-capping proteins bind in a Ca(2+)-independent manner to the fast growing ends of actin filaments (barbed end) thereby blocking the exchange of subunits at these ends. Unlike other capping proteins (such as gelsolin and severin), these proteins do not sever actin filaments (By similarity).</text>
</comment>
<comment type="subunit">
    <text evidence="1 2">Component of the F-actin capping complex, composed of a heterodimer of an alpha and a beta subunit. Component of the WASH complex, composed of F-actin-capping protein subunit alpha (CAPZA1, CAPZA2 or CAPZA3), F-actin-capping protein subunit beta (CAPZB), WASHC1, WASHC2, WASHC3, WASHC4 and WASHC5. Interacts with RCSD1/CAPZIP (By similarity). Directly interacts with CRACD; this interaction decreases binding to actin (By similarity).</text>
</comment>
<comment type="similarity">
    <text evidence="3">Belongs to the F-actin-capping protein alpha subunit family.</text>
</comment>
<reference key="1">
    <citation type="journal article" date="2003" name="Nature">
        <title>Comparative analyses of multi-species sequences from targeted genomic regions.</title>
        <authorList>
            <person name="Thomas J.W."/>
            <person name="Touchman J.W."/>
            <person name="Blakesley R.W."/>
            <person name="Bouffard G.G."/>
            <person name="Beckstrom-Sternberg S.M."/>
            <person name="Margulies E.H."/>
            <person name="Blanchette M."/>
            <person name="Siepel A.C."/>
            <person name="Thomas P.J."/>
            <person name="McDowell J.C."/>
            <person name="Maskeri B."/>
            <person name="Hansen N.F."/>
            <person name="Schwartz M.S."/>
            <person name="Weber R.J."/>
            <person name="Kent W.J."/>
            <person name="Karolchik D."/>
            <person name="Bruen T.C."/>
            <person name="Bevan R."/>
            <person name="Cutler D.J."/>
            <person name="Schwartz S."/>
            <person name="Elnitski L."/>
            <person name="Idol J.R."/>
            <person name="Prasad A.B."/>
            <person name="Lee-Lin S.-Q."/>
            <person name="Maduro V.V.B."/>
            <person name="Summers T.J."/>
            <person name="Portnoy M.E."/>
            <person name="Dietrich N.L."/>
            <person name="Akhter N."/>
            <person name="Ayele K."/>
            <person name="Benjamin B."/>
            <person name="Cariaga K."/>
            <person name="Brinkley C.P."/>
            <person name="Brooks S.Y."/>
            <person name="Granite S."/>
            <person name="Guan X."/>
            <person name="Gupta J."/>
            <person name="Haghighi P."/>
            <person name="Ho S.-L."/>
            <person name="Huang M.C."/>
            <person name="Karlins E."/>
            <person name="Laric P.L."/>
            <person name="Legaspi R."/>
            <person name="Lim M.J."/>
            <person name="Maduro Q.L."/>
            <person name="Masiello C.A."/>
            <person name="Mastrian S.D."/>
            <person name="McCloskey J.C."/>
            <person name="Pearson R."/>
            <person name="Stantripop S."/>
            <person name="Tiongson E.E."/>
            <person name="Tran J.T."/>
            <person name="Tsurgeon C."/>
            <person name="Vogt J.L."/>
            <person name="Walker M.A."/>
            <person name="Wetherby K.D."/>
            <person name="Wiggins L.S."/>
            <person name="Young A.C."/>
            <person name="Zhang L.-H."/>
            <person name="Osoegawa K."/>
            <person name="Zhu B."/>
            <person name="Zhao B."/>
            <person name="Shu C.L."/>
            <person name="De Jong P.J."/>
            <person name="Lawrence C.E."/>
            <person name="Smit A.F."/>
            <person name="Chakravarti A."/>
            <person name="Haussler D."/>
            <person name="Green P."/>
            <person name="Miller W."/>
            <person name="Green E.D."/>
        </authorList>
    </citation>
    <scope>NUCLEOTIDE SEQUENCE [LARGE SCALE GENOMIC DNA]</scope>
</reference>
<reference key="2">
    <citation type="journal article" date="2005" name="BMC Genomics">
        <title>Characterization of 954 bovine full-CDS cDNA sequences.</title>
        <authorList>
            <person name="Harhay G.P."/>
            <person name="Sonstegard T.S."/>
            <person name="Keele J.W."/>
            <person name="Heaton M.P."/>
            <person name="Clawson M.L."/>
            <person name="Snelling W.M."/>
            <person name="Wiedmann R.T."/>
            <person name="Van Tassell C.P."/>
            <person name="Smith T.P.L."/>
        </authorList>
    </citation>
    <scope>NUCLEOTIDE SEQUENCE [LARGE SCALE MRNA]</scope>
</reference>
<reference key="3">
    <citation type="submission" date="2005-08" db="EMBL/GenBank/DDBJ databases">
        <authorList>
            <consortium name="NIH - Mammalian Gene Collection (MGC) project"/>
        </authorList>
    </citation>
    <scope>NUCLEOTIDE SEQUENCE [LARGE SCALE MRNA]</scope>
    <source>
        <strain>Hereford</strain>
        <tissue>Testis</tissue>
    </source>
</reference>
<dbReference type="EMBL" id="DP000008">
    <property type="protein sequence ID" value="AAR16258.1"/>
    <property type="molecule type" value="Genomic_DNA"/>
</dbReference>
<dbReference type="EMBL" id="BT021023">
    <property type="protein sequence ID" value="AAX09040.1"/>
    <property type="molecule type" value="mRNA"/>
</dbReference>
<dbReference type="EMBL" id="BC102732">
    <property type="protein sequence ID" value="AAI02733.1"/>
    <property type="molecule type" value="mRNA"/>
</dbReference>
<dbReference type="RefSeq" id="NP_001013016.1">
    <property type="nucleotide sequence ID" value="NM_001012998.2"/>
</dbReference>
<dbReference type="PDB" id="3RM1">
    <property type="method" value="X-ray"/>
    <property type="resolution" value="1.24 A"/>
    <property type="chains" value="B=267-275"/>
</dbReference>
<dbReference type="PDBsum" id="3RM1"/>
<dbReference type="SMR" id="Q5E997"/>
<dbReference type="CORUM" id="Q5E997"/>
<dbReference type="FunCoup" id="Q5E997">
    <property type="interactions" value="3348"/>
</dbReference>
<dbReference type="IntAct" id="Q5E997">
    <property type="interactions" value="2"/>
</dbReference>
<dbReference type="STRING" id="9913.ENSBTAP00000065455"/>
<dbReference type="PaxDb" id="9913-ENSBTAP00000005324"/>
<dbReference type="PeptideAtlas" id="Q5E997"/>
<dbReference type="Ensembl" id="ENSBTAT00000005324.4">
    <property type="protein sequence ID" value="ENSBTAP00000005324.3"/>
    <property type="gene ID" value="ENSBTAG00000004072.7"/>
</dbReference>
<dbReference type="GeneID" id="493728"/>
<dbReference type="KEGG" id="bta:493728"/>
<dbReference type="CTD" id="830"/>
<dbReference type="VEuPathDB" id="HostDB:ENSBTAG00000004072"/>
<dbReference type="VGNC" id="VGNC:26757">
    <property type="gene designation" value="CAPZA2"/>
</dbReference>
<dbReference type="eggNOG" id="KOG0836">
    <property type="taxonomic scope" value="Eukaryota"/>
</dbReference>
<dbReference type="GeneTree" id="ENSGT00950000183119"/>
<dbReference type="HOGENOM" id="CLU_045161_0_0_1"/>
<dbReference type="InParanoid" id="Q5E997"/>
<dbReference type="OMA" id="VACIEDH"/>
<dbReference type="OrthoDB" id="340550at2759"/>
<dbReference type="TreeFam" id="TF314822"/>
<dbReference type="Reactome" id="R-BTA-2132295">
    <property type="pathway name" value="MHC class II antigen presentation"/>
</dbReference>
<dbReference type="Reactome" id="R-BTA-3371497">
    <property type="pathway name" value="HSP90 chaperone cycle for steroid hormone receptors (SHR) in the presence of ligand"/>
</dbReference>
<dbReference type="Reactome" id="R-BTA-6807878">
    <property type="pathway name" value="COPI-mediated anterograde transport"/>
</dbReference>
<dbReference type="Reactome" id="R-BTA-6811436">
    <property type="pathway name" value="COPI-independent Golgi-to-ER retrograde traffic"/>
</dbReference>
<dbReference type="Reactome" id="R-BTA-879415">
    <property type="pathway name" value="Advanced glycosylation endproduct receptor signaling"/>
</dbReference>
<dbReference type="Reactome" id="R-BTA-983231">
    <property type="pathway name" value="Factors involved in megakaryocyte development and platelet production"/>
</dbReference>
<dbReference type="EvolutionaryTrace" id="Q5E997"/>
<dbReference type="Proteomes" id="UP000009136">
    <property type="component" value="Chromosome 4"/>
</dbReference>
<dbReference type="Bgee" id="ENSBTAG00000004072">
    <property type="expression patterns" value="Expressed in biceps femoris and 105 other cell types or tissues"/>
</dbReference>
<dbReference type="GO" id="GO:0030863">
    <property type="term" value="C:cortical cytoskeleton"/>
    <property type="evidence" value="ECO:0000318"/>
    <property type="project" value="GO_Central"/>
</dbReference>
<dbReference type="GO" id="GO:0008290">
    <property type="term" value="C:F-actin capping protein complex"/>
    <property type="evidence" value="ECO:0000318"/>
    <property type="project" value="GO_Central"/>
</dbReference>
<dbReference type="GO" id="GO:0051015">
    <property type="term" value="F:actin filament binding"/>
    <property type="evidence" value="ECO:0000318"/>
    <property type="project" value="GO_Central"/>
</dbReference>
<dbReference type="GO" id="GO:0030036">
    <property type="term" value="P:actin cytoskeleton organization"/>
    <property type="evidence" value="ECO:0000318"/>
    <property type="project" value="GO_Central"/>
</dbReference>
<dbReference type="GO" id="GO:0051016">
    <property type="term" value="P:barbed-end actin filament capping"/>
    <property type="evidence" value="ECO:0000318"/>
    <property type="project" value="GO_Central"/>
</dbReference>
<dbReference type="FunFam" id="3.30.1140.60:FF:000001">
    <property type="entry name" value="F-actin-capping protein subunit alpha"/>
    <property type="match status" value="1"/>
</dbReference>
<dbReference type="FunFam" id="3.90.1150.210:FF:000002">
    <property type="entry name" value="F-actin-capping protein subunit alpha"/>
    <property type="match status" value="1"/>
</dbReference>
<dbReference type="Gene3D" id="3.30.1140.60">
    <property type="entry name" value="F-actin capping protein, alpha subunit"/>
    <property type="match status" value="1"/>
</dbReference>
<dbReference type="Gene3D" id="3.90.1150.210">
    <property type="entry name" value="F-actin capping protein, beta subunit"/>
    <property type="match status" value="1"/>
</dbReference>
<dbReference type="InterPro" id="IPR002189">
    <property type="entry name" value="CapZ_alpha"/>
</dbReference>
<dbReference type="InterPro" id="IPR037282">
    <property type="entry name" value="CapZ_alpha/beta"/>
</dbReference>
<dbReference type="InterPro" id="IPR042276">
    <property type="entry name" value="CapZ_alpha/beta_2"/>
</dbReference>
<dbReference type="InterPro" id="IPR042489">
    <property type="entry name" value="CapZ_alpha_1"/>
</dbReference>
<dbReference type="InterPro" id="IPR017865">
    <property type="entry name" value="F-actin_cap_asu_CS"/>
</dbReference>
<dbReference type="PANTHER" id="PTHR10653">
    <property type="entry name" value="F-ACTIN-CAPPING PROTEIN SUBUNIT ALPHA"/>
    <property type="match status" value="1"/>
</dbReference>
<dbReference type="PANTHER" id="PTHR10653:SF2">
    <property type="entry name" value="F-ACTIN-CAPPING PROTEIN SUBUNIT ALPHA-2"/>
    <property type="match status" value="1"/>
</dbReference>
<dbReference type="Pfam" id="PF01267">
    <property type="entry name" value="F-actin_cap_A"/>
    <property type="match status" value="1"/>
</dbReference>
<dbReference type="PRINTS" id="PR00191">
    <property type="entry name" value="FACTINCAPA"/>
</dbReference>
<dbReference type="SUPFAM" id="SSF90096">
    <property type="entry name" value="Subunits of heterodimeric actin filament capping protein Capz"/>
    <property type="match status" value="1"/>
</dbReference>
<dbReference type="PROSITE" id="PS00748">
    <property type="entry name" value="F_ACTIN_CAPPING_A_1"/>
    <property type="match status" value="1"/>
</dbReference>
<dbReference type="PROSITE" id="PS00749">
    <property type="entry name" value="F_ACTIN_CAPPING_A_2"/>
    <property type="match status" value="1"/>
</dbReference>
<accession>Q5E997</accession>
<accession>A4D7R7</accession>
<name>CAZA2_BOVIN</name>
<keyword id="KW-0002">3D-structure</keyword>
<keyword id="KW-0007">Acetylation</keyword>
<keyword id="KW-0117">Actin capping</keyword>
<keyword id="KW-0009">Actin-binding</keyword>
<keyword id="KW-0597">Phosphoprotein</keyword>
<keyword id="KW-1185">Reference proteome</keyword>